<gene>
    <name evidence="2" type="primary">ddl</name>
    <name type="ordered locus">Cphamn1_1004</name>
</gene>
<proteinExistence type="inferred from homology"/>
<keyword id="KW-0067">ATP-binding</keyword>
<keyword id="KW-0133">Cell shape</keyword>
<keyword id="KW-0961">Cell wall biogenesis/degradation</keyword>
<keyword id="KW-0963">Cytoplasm</keyword>
<keyword id="KW-0436">Ligase</keyword>
<keyword id="KW-0460">Magnesium</keyword>
<keyword id="KW-0464">Manganese</keyword>
<keyword id="KW-0479">Metal-binding</keyword>
<keyword id="KW-0547">Nucleotide-binding</keyword>
<keyword id="KW-0573">Peptidoglycan synthesis</keyword>
<dbReference type="EC" id="6.3.2.4" evidence="2"/>
<dbReference type="EMBL" id="CP001101">
    <property type="protein sequence ID" value="ACE03946.1"/>
    <property type="molecule type" value="Genomic_DNA"/>
</dbReference>
<dbReference type="SMR" id="B3EQ14"/>
<dbReference type="STRING" id="331678.Cphamn1_1004"/>
<dbReference type="KEGG" id="cpb:Cphamn1_1004"/>
<dbReference type="eggNOG" id="COG1181">
    <property type="taxonomic scope" value="Bacteria"/>
</dbReference>
<dbReference type="HOGENOM" id="CLU_039268_0_0_10"/>
<dbReference type="OrthoDB" id="9813261at2"/>
<dbReference type="UniPathway" id="UPA00219"/>
<dbReference type="GO" id="GO:0005829">
    <property type="term" value="C:cytosol"/>
    <property type="evidence" value="ECO:0007669"/>
    <property type="project" value="TreeGrafter"/>
</dbReference>
<dbReference type="GO" id="GO:0005524">
    <property type="term" value="F:ATP binding"/>
    <property type="evidence" value="ECO:0007669"/>
    <property type="project" value="UniProtKB-KW"/>
</dbReference>
<dbReference type="GO" id="GO:0008716">
    <property type="term" value="F:D-alanine-D-alanine ligase activity"/>
    <property type="evidence" value="ECO:0007669"/>
    <property type="project" value="UniProtKB-UniRule"/>
</dbReference>
<dbReference type="GO" id="GO:0046872">
    <property type="term" value="F:metal ion binding"/>
    <property type="evidence" value="ECO:0007669"/>
    <property type="project" value="UniProtKB-KW"/>
</dbReference>
<dbReference type="GO" id="GO:0071555">
    <property type="term" value="P:cell wall organization"/>
    <property type="evidence" value="ECO:0007669"/>
    <property type="project" value="UniProtKB-KW"/>
</dbReference>
<dbReference type="GO" id="GO:0009252">
    <property type="term" value="P:peptidoglycan biosynthetic process"/>
    <property type="evidence" value="ECO:0007669"/>
    <property type="project" value="UniProtKB-UniRule"/>
</dbReference>
<dbReference type="GO" id="GO:0008360">
    <property type="term" value="P:regulation of cell shape"/>
    <property type="evidence" value="ECO:0007669"/>
    <property type="project" value="UniProtKB-KW"/>
</dbReference>
<dbReference type="FunFam" id="3.30.1490.20:FF:000007">
    <property type="entry name" value="D-alanine--D-alanine ligase"/>
    <property type="match status" value="1"/>
</dbReference>
<dbReference type="FunFam" id="3.30.470.20:FF:000008">
    <property type="entry name" value="D-alanine--D-alanine ligase"/>
    <property type="match status" value="1"/>
</dbReference>
<dbReference type="Gene3D" id="3.40.50.20">
    <property type="match status" value="1"/>
</dbReference>
<dbReference type="Gene3D" id="3.30.1490.20">
    <property type="entry name" value="ATP-grasp fold, A domain"/>
    <property type="match status" value="1"/>
</dbReference>
<dbReference type="Gene3D" id="3.30.470.20">
    <property type="entry name" value="ATP-grasp fold, B domain"/>
    <property type="match status" value="1"/>
</dbReference>
<dbReference type="HAMAP" id="MF_00047">
    <property type="entry name" value="Dala_Dala_lig"/>
    <property type="match status" value="1"/>
</dbReference>
<dbReference type="InterPro" id="IPR011761">
    <property type="entry name" value="ATP-grasp"/>
</dbReference>
<dbReference type="InterPro" id="IPR013815">
    <property type="entry name" value="ATP_grasp_subdomain_1"/>
</dbReference>
<dbReference type="InterPro" id="IPR000291">
    <property type="entry name" value="D-Ala_lig_Van_CS"/>
</dbReference>
<dbReference type="InterPro" id="IPR005905">
    <property type="entry name" value="D_ala_D_ala"/>
</dbReference>
<dbReference type="InterPro" id="IPR011095">
    <property type="entry name" value="Dala_Dala_lig_C"/>
</dbReference>
<dbReference type="InterPro" id="IPR011127">
    <property type="entry name" value="Dala_Dala_lig_N"/>
</dbReference>
<dbReference type="InterPro" id="IPR016185">
    <property type="entry name" value="PreATP-grasp_dom_sf"/>
</dbReference>
<dbReference type="NCBIfam" id="TIGR01205">
    <property type="entry name" value="D_ala_D_alaTIGR"/>
    <property type="match status" value="1"/>
</dbReference>
<dbReference type="NCBIfam" id="NF002378">
    <property type="entry name" value="PRK01372.1"/>
    <property type="match status" value="1"/>
</dbReference>
<dbReference type="NCBIfam" id="NF002528">
    <property type="entry name" value="PRK01966.1-4"/>
    <property type="match status" value="1"/>
</dbReference>
<dbReference type="PANTHER" id="PTHR23132">
    <property type="entry name" value="D-ALANINE--D-ALANINE LIGASE"/>
    <property type="match status" value="1"/>
</dbReference>
<dbReference type="PANTHER" id="PTHR23132:SF25">
    <property type="entry name" value="D-ALANINE--D-ALANINE LIGASE A"/>
    <property type="match status" value="1"/>
</dbReference>
<dbReference type="Pfam" id="PF07478">
    <property type="entry name" value="Dala_Dala_lig_C"/>
    <property type="match status" value="1"/>
</dbReference>
<dbReference type="Pfam" id="PF01820">
    <property type="entry name" value="Dala_Dala_lig_N"/>
    <property type="match status" value="1"/>
</dbReference>
<dbReference type="PIRSF" id="PIRSF039102">
    <property type="entry name" value="Ddl/VanB"/>
    <property type="match status" value="1"/>
</dbReference>
<dbReference type="SUPFAM" id="SSF56059">
    <property type="entry name" value="Glutathione synthetase ATP-binding domain-like"/>
    <property type="match status" value="1"/>
</dbReference>
<dbReference type="SUPFAM" id="SSF52440">
    <property type="entry name" value="PreATP-grasp domain"/>
    <property type="match status" value="1"/>
</dbReference>
<dbReference type="PROSITE" id="PS50975">
    <property type="entry name" value="ATP_GRASP"/>
    <property type="match status" value="1"/>
</dbReference>
<dbReference type="PROSITE" id="PS00843">
    <property type="entry name" value="DALA_DALA_LIGASE_1"/>
    <property type="match status" value="1"/>
</dbReference>
<dbReference type="PROSITE" id="PS00844">
    <property type="entry name" value="DALA_DALA_LIGASE_2"/>
    <property type="match status" value="1"/>
</dbReference>
<accession>B3EQ14</accession>
<evidence type="ECO:0000250" key="1"/>
<evidence type="ECO:0000255" key="2">
    <source>
        <dbReference type="HAMAP-Rule" id="MF_00047"/>
    </source>
</evidence>
<sequence>MPNVTVALLFGGKSSEHEISIISAKAVSAHIDRTTYTLFPLYISRDGRWFKGRTARKVLDLDITGLLKSRTIETTNRQLLAMTENRDEDLFDFNFQKEGIEVAFPVLHGAYGEDGKIQGLLEVFAIPYTGCNVQSSSMTMDKEITKLCAVQAGIHVADYMTVLRPDYLNNRSAIAETIKKRFAPPFFVKPANLGSSVGIAKIHSFDELENALDEACRLDVKILVEKAIEGREVEVAVLGNEHPIASVPGEIEPGGDFYDFTDKYIDGSARLHIPARVDADTSARLQEEGIKAFRALGCSGMSRIDFFVEKGSGRIILNEINSIPGFTSISMYPMLMEHAGIGFTELIDRLVRFALEKTPA</sequence>
<reference key="1">
    <citation type="submission" date="2008-06" db="EMBL/GenBank/DDBJ databases">
        <title>Complete sequence of Chlorobium phaeobacteroides BS1.</title>
        <authorList>
            <consortium name="US DOE Joint Genome Institute"/>
            <person name="Lucas S."/>
            <person name="Copeland A."/>
            <person name="Lapidus A."/>
            <person name="Glavina del Rio T."/>
            <person name="Dalin E."/>
            <person name="Tice H."/>
            <person name="Bruce D."/>
            <person name="Goodwin L."/>
            <person name="Pitluck S."/>
            <person name="Schmutz J."/>
            <person name="Larimer F."/>
            <person name="Land M."/>
            <person name="Hauser L."/>
            <person name="Kyrpides N."/>
            <person name="Ovchinnikova G."/>
            <person name="Li T."/>
            <person name="Liu Z."/>
            <person name="Zhao F."/>
            <person name="Overmann J."/>
            <person name="Bryant D.A."/>
            <person name="Richardson P."/>
        </authorList>
    </citation>
    <scope>NUCLEOTIDE SEQUENCE [LARGE SCALE GENOMIC DNA]</scope>
    <source>
        <strain>BS1</strain>
    </source>
</reference>
<protein>
    <recommendedName>
        <fullName evidence="2">D-alanine--D-alanine ligase</fullName>
        <ecNumber evidence="2">6.3.2.4</ecNumber>
    </recommendedName>
    <alternativeName>
        <fullName evidence="2">D-Ala-D-Ala ligase</fullName>
    </alternativeName>
    <alternativeName>
        <fullName evidence="2">D-alanylalanine synthetase</fullName>
    </alternativeName>
</protein>
<feature type="chain" id="PRO_1000091171" description="D-alanine--D-alanine ligase">
    <location>
        <begin position="1"/>
        <end position="360"/>
    </location>
</feature>
<feature type="domain" description="ATP-grasp" evidence="2">
    <location>
        <begin position="146"/>
        <end position="352"/>
    </location>
</feature>
<feature type="binding site" evidence="2">
    <location>
        <begin position="179"/>
        <end position="234"/>
    </location>
    <ligand>
        <name>ATP</name>
        <dbReference type="ChEBI" id="CHEBI:30616"/>
    </ligand>
</feature>
<feature type="binding site" evidence="2">
    <location>
        <position position="305"/>
    </location>
    <ligand>
        <name>Mg(2+)</name>
        <dbReference type="ChEBI" id="CHEBI:18420"/>
        <label>1</label>
    </ligand>
</feature>
<feature type="binding site" evidence="2">
    <location>
        <position position="319"/>
    </location>
    <ligand>
        <name>Mg(2+)</name>
        <dbReference type="ChEBI" id="CHEBI:18420"/>
        <label>1</label>
    </ligand>
</feature>
<feature type="binding site" evidence="2">
    <location>
        <position position="319"/>
    </location>
    <ligand>
        <name>Mg(2+)</name>
        <dbReference type="ChEBI" id="CHEBI:18420"/>
        <label>2</label>
    </ligand>
</feature>
<feature type="binding site" evidence="2">
    <location>
        <position position="321"/>
    </location>
    <ligand>
        <name>Mg(2+)</name>
        <dbReference type="ChEBI" id="CHEBI:18420"/>
        <label>2</label>
    </ligand>
</feature>
<name>DDL_CHLPB</name>
<comment type="function">
    <text evidence="2">Cell wall formation.</text>
</comment>
<comment type="catalytic activity">
    <reaction evidence="2">
        <text>2 D-alanine + ATP = D-alanyl-D-alanine + ADP + phosphate + H(+)</text>
        <dbReference type="Rhea" id="RHEA:11224"/>
        <dbReference type="ChEBI" id="CHEBI:15378"/>
        <dbReference type="ChEBI" id="CHEBI:30616"/>
        <dbReference type="ChEBI" id="CHEBI:43474"/>
        <dbReference type="ChEBI" id="CHEBI:57416"/>
        <dbReference type="ChEBI" id="CHEBI:57822"/>
        <dbReference type="ChEBI" id="CHEBI:456216"/>
        <dbReference type="EC" id="6.3.2.4"/>
    </reaction>
</comment>
<comment type="cofactor">
    <cofactor evidence="1">
        <name>Mg(2+)</name>
        <dbReference type="ChEBI" id="CHEBI:18420"/>
    </cofactor>
    <cofactor evidence="1">
        <name>Mn(2+)</name>
        <dbReference type="ChEBI" id="CHEBI:29035"/>
    </cofactor>
    <text evidence="1">Binds 2 magnesium or manganese ions per subunit.</text>
</comment>
<comment type="pathway">
    <text evidence="2">Cell wall biogenesis; peptidoglycan biosynthesis.</text>
</comment>
<comment type="subcellular location">
    <subcellularLocation>
        <location evidence="2">Cytoplasm</location>
    </subcellularLocation>
</comment>
<comment type="similarity">
    <text evidence="2">Belongs to the D-alanine--D-alanine ligase family.</text>
</comment>
<organism>
    <name type="scientific">Chlorobium phaeobacteroides (strain BS1)</name>
    <dbReference type="NCBI Taxonomy" id="331678"/>
    <lineage>
        <taxon>Bacteria</taxon>
        <taxon>Pseudomonadati</taxon>
        <taxon>Chlorobiota</taxon>
        <taxon>Chlorobiia</taxon>
        <taxon>Chlorobiales</taxon>
        <taxon>Chlorobiaceae</taxon>
        <taxon>Chlorobium/Pelodictyon group</taxon>
        <taxon>Chlorobium</taxon>
    </lineage>
</organism>